<gene>
    <name type="ordered locus">BCE_4545</name>
</gene>
<protein>
    <recommendedName>
        <fullName>UPF0758 protein BCE_4545</fullName>
    </recommendedName>
</protein>
<name>Y4545_BACC1</name>
<sequence>MNGIRDVVKEEQPRERLLLEGAGSLSNRELLAVLLRTGSKEETVLKLSDKILHHFDGLRMLKDATLEELVSIHGVGVAKATQLIAAFELGRRMVRLEYQNRYSIRSPEDCATYMMEEMRFLQQEHFVCLYLNTKNQVIHRQTIFIGSLNSSIVHPREVFKEAFRRAAASIICLHNHPSGDPAPSREDIEVTKRLVECGRIIGIEVLDHIIIGDHKFVSLKEKGHI</sequence>
<keyword id="KW-0378">Hydrolase</keyword>
<keyword id="KW-0479">Metal-binding</keyword>
<keyword id="KW-0482">Metalloprotease</keyword>
<keyword id="KW-0645">Protease</keyword>
<keyword id="KW-0862">Zinc</keyword>
<organism>
    <name type="scientific">Bacillus cereus (strain ATCC 10987 / NRS 248)</name>
    <dbReference type="NCBI Taxonomy" id="222523"/>
    <lineage>
        <taxon>Bacteria</taxon>
        <taxon>Bacillati</taxon>
        <taxon>Bacillota</taxon>
        <taxon>Bacilli</taxon>
        <taxon>Bacillales</taxon>
        <taxon>Bacillaceae</taxon>
        <taxon>Bacillus</taxon>
        <taxon>Bacillus cereus group</taxon>
    </lineage>
</organism>
<comment type="similarity">
    <text evidence="2">Belongs to the UPF0758 family.</text>
</comment>
<proteinExistence type="inferred from homology"/>
<dbReference type="EMBL" id="AE017194">
    <property type="protein sequence ID" value="AAS43446.1"/>
    <property type="molecule type" value="Genomic_DNA"/>
</dbReference>
<dbReference type="SMR" id="Q72ZX2"/>
<dbReference type="KEGG" id="bca:BCE_4545"/>
<dbReference type="HOGENOM" id="CLU_073529_0_2_9"/>
<dbReference type="Proteomes" id="UP000002527">
    <property type="component" value="Chromosome"/>
</dbReference>
<dbReference type="GO" id="GO:0046872">
    <property type="term" value="F:metal ion binding"/>
    <property type="evidence" value="ECO:0007669"/>
    <property type="project" value="UniProtKB-KW"/>
</dbReference>
<dbReference type="GO" id="GO:0008237">
    <property type="term" value="F:metallopeptidase activity"/>
    <property type="evidence" value="ECO:0007669"/>
    <property type="project" value="UniProtKB-KW"/>
</dbReference>
<dbReference type="GO" id="GO:0006508">
    <property type="term" value="P:proteolysis"/>
    <property type="evidence" value="ECO:0007669"/>
    <property type="project" value="UniProtKB-KW"/>
</dbReference>
<dbReference type="CDD" id="cd08071">
    <property type="entry name" value="MPN_DUF2466"/>
    <property type="match status" value="1"/>
</dbReference>
<dbReference type="Gene3D" id="3.40.140.10">
    <property type="entry name" value="Cytidine Deaminase, domain 2"/>
    <property type="match status" value="1"/>
</dbReference>
<dbReference type="InterPro" id="IPR037518">
    <property type="entry name" value="MPN"/>
</dbReference>
<dbReference type="InterPro" id="IPR025657">
    <property type="entry name" value="RadC_JAB"/>
</dbReference>
<dbReference type="InterPro" id="IPR010994">
    <property type="entry name" value="RuvA_2-like"/>
</dbReference>
<dbReference type="InterPro" id="IPR001405">
    <property type="entry name" value="UPF0758"/>
</dbReference>
<dbReference type="InterPro" id="IPR020891">
    <property type="entry name" value="UPF0758_CS"/>
</dbReference>
<dbReference type="InterPro" id="IPR046778">
    <property type="entry name" value="UPF0758_N"/>
</dbReference>
<dbReference type="NCBIfam" id="NF000642">
    <property type="entry name" value="PRK00024.1"/>
    <property type="match status" value="1"/>
</dbReference>
<dbReference type="NCBIfam" id="TIGR00608">
    <property type="entry name" value="radc"/>
    <property type="match status" value="1"/>
</dbReference>
<dbReference type="PANTHER" id="PTHR30471">
    <property type="entry name" value="DNA REPAIR PROTEIN RADC"/>
    <property type="match status" value="1"/>
</dbReference>
<dbReference type="PANTHER" id="PTHR30471:SF3">
    <property type="entry name" value="UPF0758 PROTEIN YEES-RELATED"/>
    <property type="match status" value="1"/>
</dbReference>
<dbReference type="Pfam" id="PF04002">
    <property type="entry name" value="RadC"/>
    <property type="match status" value="1"/>
</dbReference>
<dbReference type="Pfam" id="PF20582">
    <property type="entry name" value="UPF0758_N"/>
    <property type="match status" value="1"/>
</dbReference>
<dbReference type="SUPFAM" id="SSF102712">
    <property type="entry name" value="JAB1/MPN domain"/>
    <property type="match status" value="1"/>
</dbReference>
<dbReference type="SUPFAM" id="SSF47781">
    <property type="entry name" value="RuvA domain 2-like"/>
    <property type="match status" value="1"/>
</dbReference>
<dbReference type="PROSITE" id="PS50249">
    <property type="entry name" value="MPN"/>
    <property type="match status" value="1"/>
</dbReference>
<dbReference type="PROSITE" id="PS01302">
    <property type="entry name" value="UPF0758"/>
    <property type="match status" value="1"/>
</dbReference>
<reference key="1">
    <citation type="journal article" date="2004" name="Nucleic Acids Res.">
        <title>The genome sequence of Bacillus cereus ATCC 10987 reveals metabolic adaptations and a large plasmid related to Bacillus anthracis pXO1.</title>
        <authorList>
            <person name="Rasko D.A."/>
            <person name="Ravel J."/>
            <person name="Oekstad O.A."/>
            <person name="Helgason E."/>
            <person name="Cer R.Z."/>
            <person name="Jiang L."/>
            <person name="Shores K.A."/>
            <person name="Fouts D.E."/>
            <person name="Tourasse N.J."/>
            <person name="Angiuoli S.V."/>
            <person name="Kolonay J.F."/>
            <person name="Nelson W.C."/>
            <person name="Kolstoe A.-B."/>
            <person name="Fraser C.M."/>
            <person name="Read T.D."/>
        </authorList>
    </citation>
    <scope>NUCLEOTIDE SEQUENCE [LARGE SCALE GENOMIC DNA]</scope>
    <source>
        <strain>ATCC 10987 / NRS 248</strain>
    </source>
</reference>
<feature type="chain" id="PRO_0000190679" description="UPF0758 protein BCE_4545">
    <location>
        <begin position="1"/>
        <end position="225"/>
    </location>
</feature>
<feature type="domain" description="MPN" evidence="1">
    <location>
        <begin position="103"/>
        <end position="225"/>
    </location>
</feature>
<feature type="short sequence motif" description="JAMM motif" evidence="1">
    <location>
        <begin position="174"/>
        <end position="187"/>
    </location>
</feature>
<feature type="binding site" evidence="1">
    <location>
        <position position="174"/>
    </location>
    <ligand>
        <name>Zn(2+)</name>
        <dbReference type="ChEBI" id="CHEBI:29105"/>
        <note>catalytic</note>
    </ligand>
</feature>
<feature type="binding site" evidence="1">
    <location>
        <position position="176"/>
    </location>
    <ligand>
        <name>Zn(2+)</name>
        <dbReference type="ChEBI" id="CHEBI:29105"/>
        <note>catalytic</note>
    </ligand>
</feature>
<feature type="binding site" evidence="1">
    <location>
        <position position="187"/>
    </location>
    <ligand>
        <name>Zn(2+)</name>
        <dbReference type="ChEBI" id="CHEBI:29105"/>
        <note>catalytic</note>
    </ligand>
</feature>
<evidence type="ECO:0000255" key="1">
    <source>
        <dbReference type="PROSITE-ProRule" id="PRU01182"/>
    </source>
</evidence>
<evidence type="ECO:0000305" key="2"/>
<accession>Q72ZX2</accession>